<gene>
    <name type="primary">Adh</name>
</gene>
<comment type="catalytic activity">
    <reaction evidence="3 5">
        <text>a primary alcohol + NAD(+) = an aldehyde + NADH + H(+)</text>
        <dbReference type="Rhea" id="RHEA:10736"/>
        <dbReference type="ChEBI" id="CHEBI:15378"/>
        <dbReference type="ChEBI" id="CHEBI:15734"/>
        <dbReference type="ChEBI" id="CHEBI:17478"/>
        <dbReference type="ChEBI" id="CHEBI:57540"/>
        <dbReference type="ChEBI" id="CHEBI:57945"/>
        <dbReference type="EC" id="1.1.1.1"/>
    </reaction>
</comment>
<comment type="catalytic activity">
    <reaction evidence="3 5">
        <text>a secondary alcohol + NAD(+) = a ketone + NADH + H(+)</text>
        <dbReference type="Rhea" id="RHEA:10740"/>
        <dbReference type="ChEBI" id="CHEBI:15378"/>
        <dbReference type="ChEBI" id="CHEBI:17087"/>
        <dbReference type="ChEBI" id="CHEBI:35681"/>
        <dbReference type="ChEBI" id="CHEBI:57540"/>
        <dbReference type="ChEBI" id="CHEBI:57945"/>
        <dbReference type="EC" id="1.1.1.1"/>
    </reaction>
</comment>
<comment type="subunit">
    <text evidence="5">Homodimer.</text>
</comment>
<comment type="similarity">
    <text evidence="4 5">Belongs to the short-chain dehydrogenases/reductases (SDR) family.</text>
</comment>
<accession>Q9NG40</accession>
<name>ADH_DROIN</name>
<protein>
    <recommendedName>
        <fullName>Alcohol dehydrogenase</fullName>
        <ecNumber>1.1.1.1</ecNumber>
    </recommendedName>
</protein>
<dbReference type="EC" id="1.1.1.1"/>
<dbReference type="EMBL" id="U95273">
    <property type="protein sequence ID" value="AAD00799.1"/>
    <property type="molecule type" value="Genomic_DNA"/>
</dbReference>
<dbReference type="EMBL" id="AF264076">
    <property type="protein sequence ID" value="AAF72718.1"/>
    <property type="molecule type" value="Genomic_DNA"/>
</dbReference>
<dbReference type="SMR" id="Q9NG40"/>
<dbReference type="GO" id="GO:0005737">
    <property type="term" value="C:cytoplasm"/>
    <property type="evidence" value="ECO:0007669"/>
    <property type="project" value="TreeGrafter"/>
</dbReference>
<dbReference type="GO" id="GO:0004022">
    <property type="term" value="F:alcohol dehydrogenase (NAD+) activity"/>
    <property type="evidence" value="ECO:0000250"/>
    <property type="project" value="UniProtKB"/>
</dbReference>
<dbReference type="GO" id="GO:0046164">
    <property type="term" value="P:alcohol catabolic process"/>
    <property type="evidence" value="ECO:0000250"/>
    <property type="project" value="UniProtKB"/>
</dbReference>
<dbReference type="CDD" id="cd05323">
    <property type="entry name" value="ADH_SDR_c_like"/>
    <property type="match status" value="1"/>
</dbReference>
<dbReference type="FunFam" id="3.40.50.720:FF:000302">
    <property type="entry name" value="Alcohol dehydrogenase"/>
    <property type="match status" value="1"/>
</dbReference>
<dbReference type="Gene3D" id="3.40.50.720">
    <property type="entry name" value="NAD(P)-binding Rossmann-like Domain"/>
    <property type="match status" value="1"/>
</dbReference>
<dbReference type="InterPro" id="IPR002425">
    <property type="entry name" value="ADH_Drosophila-type"/>
</dbReference>
<dbReference type="InterPro" id="IPR036291">
    <property type="entry name" value="NAD(P)-bd_dom_sf"/>
</dbReference>
<dbReference type="InterPro" id="IPR020904">
    <property type="entry name" value="Sc_DH/Rdtase_CS"/>
</dbReference>
<dbReference type="InterPro" id="IPR002347">
    <property type="entry name" value="SDR_fam"/>
</dbReference>
<dbReference type="PANTHER" id="PTHR44229">
    <property type="entry name" value="15-HYDROXYPROSTAGLANDIN DEHYDROGENASE [NAD(+)]"/>
    <property type="match status" value="1"/>
</dbReference>
<dbReference type="PANTHER" id="PTHR44229:SF8">
    <property type="entry name" value="ALCOHOL DEHYDROGENASE-RELATED"/>
    <property type="match status" value="1"/>
</dbReference>
<dbReference type="Pfam" id="PF00106">
    <property type="entry name" value="adh_short"/>
    <property type="match status" value="1"/>
</dbReference>
<dbReference type="PRINTS" id="PR01168">
    <property type="entry name" value="ALCDHDRGNASE"/>
</dbReference>
<dbReference type="PRINTS" id="PR01167">
    <property type="entry name" value="INSADHFAMILY"/>
</dbReference>
<dbReference type="PRINTS" id="PR00080">
    <property type="entry name" value="SDRFAMILY"/>
</dbReference>
<dbReference type="SUPFAM" id="SSF51735">
    <property type="entry name" value="NAD(P)-binding Rossmann-fold domains"/>
    <property type="match status" value="1"/>
</dbReference>
<dbReference type="PROSITE" id="PS00061">
    <property type="entry name" value="ADH_SHORT"/>
    <property type="match status" value="1"/>
</dbReference>
<feature type="chain" id="PRO_0000054469" description="Alcohol dehydrogenase">
    <location>
        <begin position="1"/>
        <end position="254"/>
    </location>
</feature>
<feature type="active site" description="Proton acceptor" evidence="3">
    <location>
        <position position="151"/>
    </location>
</feature>
<feature type="binding site" evidence="2">
    <location>
        <begin position="9"/>
        <end position="32"/>
    </location>
    <ligand>
        <name>NAD(+)</name>
        <dbReference type="ChEBI" id="CHEBI:57540"/>
    </ligand>
</feature>
<feature type="binding site" evidence="1">
    <location>
        <position position="138"/>
    </location>
    <ligand>
        <name>substrate</name>
    </ligand>
</feature>
<feature type="sequence conflict" description="In Ref. 2; AAF72718." evidence="5" ref="2">
    <original>I</original>
    <variation>V</variation>
    <location>
        <position position="35"/>
    </location>
</feature>
<feature type="sequence conflict" description="In Ref. 2; AAF72718." evidence="5" ref="2">
    <original>AA</original>
    <variation>ED</variation>
    <location>
        <begin position="156"/>
        <end position="157"/>
    </location>
</feature>
<feature type="sequence conflict" description="In Ref. 2; AAF72718." evidence="5" ref="2">
    <original>S</original>
    <variation>C</variation>
    <location>
        <position position="164"/>
    </location>
</feature>
<reference evidence="6" key="1">
    <citation type="journal article" date="1998" name="Evolution">
        <title>A molecular phylogeny of the Drosophila willistoni group: conflicts between species concepts?</title>
        <authorList>
            <person name="Gleason J.M."/>
            <person name="Griffith E.C."/>
            <person name="Powell J.R."/>
        </authorList>
        <dbReference type="AGRICOLA" id="IND21806050"/>
    </citation>
    <scope>NUCLEOTIDE SEQUENCE [GENOMIC DNA]</scope>
    <source>
        <strain evidence="6">FA</strain>
    </source>
</reference>
<reference evidence="5" key="2">
    <citation type="thesis" date="2000" institute="University of Arizona / Tucson" country="United States">
        <title>Phylogenetic relationships of flies in family Drosophilidae inferred by combined analysis of morphological and molecular characters.</title>
        <authorList>
            <person name="O'Grady P.M."/>
        </authorList>
    </citation>
    <scope>NUCLEOTIDE SEQUENCE [GENOMIC DNA] OF 32-166</scope>
</reference>
<keyword id="KW-0520">NAD</keyword>
<keyword id="KW-0560">Oxidoreductase</keyword>
<sequence length="254" mass="27620">MALTNKNIIFVAGLGGIGLDTSRELVKRDLKNLVILDRIDNPAAIAELKAINPKVTVTFYPYDVTTPLTETTKLLKTIFAQLKTVDVLINGAGILDDHQIERTIAVNFTGLVNTTTAILDFWDKRKGGPGGVICNIGSVTGFNAIYQVPVYSASKAAVVSFTQSIAKLANVTGVTAFTVNPGITKTTLVHKFNSWLDVETRVAEKLLEHPTQTTLACAQNFVKAIELNKNGAIWKLDLGTLEPIEWTKHWDSGI</sequence>
<evidence type="ECO:0000250" key="1"/>
<evidence type="ECO:0000250" key="2">
    <source>
        <dbReference type="UniProtKB" id="Q05114"/>
    </source>
</evidence>
<evidence type="ECO:0000255" key="3">
    <source>
        <dbReference type="PROSITE-ProRule" id="PRU10001"/>
    </source>
</evidence>
<evidence type="ECO:0000255" key="4">
    <source>
        <dbReference type="RuleBase" id="RU000363"/>
    </source>
</evidence>
<evidence type="ECO:0000305" key="5"/>
<evidence type="ECO:0000312" key="6">
    <source>
        <dbReference type="EMBL" id="AAD00799.1"/>
    </source>
</evidence>
<proteinExistence type="inferred from homology"/>
<organism evidence="6">
    <name type="scientific">Drosophila insularis</name>
    <name type="common">Fruit fly</name>
    <dbReference type="NCBI Taxonomy" id="46792"/>
    <lineage>
        <taxon>Eukaryota</taxon>
        <taxon>Metazoa</taxon>
        <taxon>Ecdysozoa</taxon>
        <taxon>Arthropoda</taxon>
        <taxon>Hexapoda</taxon>
        <taxon>Insecta</taxon>
        <taxon>Pterygota</taxon>
        <taxon>Neoptera</taxon>
        <taxon>Endopterygota</taxon>
        <taxon>Diptera</taxon>
        <taxon>Brachycera</taxon>
        <taxon>Muscomorpha</taxon>
        <taxon>Ephydroidea</taxon>
        <taxon>Drosophilidae</taxon>
        <taxon>Drosophila</taxon>
        <taxon>Sophophora</taxon>
    </lineage>
</organism>